<protein>
    <recommendedName>
        <fullName evidence="1">Pyridoxine 5'-phosphate synthase</fullName>
        <shortName evidence="1">PNP synthase</shortName>
        <ecNumber evidence="1">2.6.99.2</ecNumber>
    </recommendedName>
</protein>
<evidence type="ECO:0000255" key="1">
    <source>
        <dbReference type="HAMAP-Rule" id="MF_00279"/>
    </source>
</evidence>
<reference key="1">
    <citation type="journal article" date="2005" name="Infect. Immun.">
        <title>Whole-genome analyses of speciation events in pathogenic Brucellae.</title>
        <authorList>
            <person name="Chain P.S."/>
            <person name="Comerci D.J."/>
            <person name="Tolmasky M.E."/>
            <person name="Larimer F.W."/>
            <person name="Malfatti S.A."/>
            <person name="Vergez L.M."/>
            <person name="Aguero F."/>
            <person name="Land M.L."/>
            <person name="Ugalde R.A."/>
            <person name="Garcia E."/>
        </authorList>
    </citation>
    <scope>NUCLEOTIDE SEQUENCE [LARGE SCALE GENOMIC DNA]</scope>
    <source>
        <strain>2308</strain>
    </source>
</reference>
<feature type="chain" id="PRO_0000231791" description="Pyridoxine 5'-phosphate synthase">
    <location>
        <begin position="1"/>
        <end position="246"/>
    </location>
</feature>
<feature type="active site" description="Proton acceptor" evidence="1">
    <location>
        <position position="44"/>
    </location>
</feature>
<feature type="active site" description="Proton acceptor" evidence="1">
    <location>
        <position position="76"/>
    </location>
</feature>
<feature type="active site" description="Proton donor" evidence="1">
    <location>
        <position position="198"/>
    </location>
</feature>
<feature type="binding site" evidence="1">
    <location>
        <position position="8"/>
    </location>
    <ligand>
        <name>3-amino-2-oxopropyl phosphate</name>
        <dbReference type="ChEBI" id="CHEBI:57279"/>
    </ligand>
</feature>
<feature type="binding site" evidence="1">
    <location>
        <position position="19"/>
    </location>
    <ligand>
        <name>3-amino-2-oxopropyl phosphate</name>
        <dbReference type="ChEBI" id="CHEBI:57279"/>
    </ligand>
</feature>
<feature type="binding site" evidence="1">
    <location>
        <position position="46"/>
    </location>
    <ligand>
        <name>1-deoxy-D-xylulose 5-phosphate</name>
        <dbReference type="ChEBI" id="CHEBI:57792"/>
    </ligand>
</feature>
<feature type="binding site" evidence="1">
    <location>
        <position position="51"/>
    </location>
    <ligand>
        <name>1-deoxy-D-xylulose 5-phosphate</name>
        <dbReference type="ChEBI" id="CHEBI:57792"/>
    </ligand>
</feature>
<feature type="binding site" evidence="1">
    <location>
        <position position="106"/>
    </location>
    <ligand>
        <name>1-deoxy-D-xylulose 5-phosphate</name>
        <dbReference type="ChEBI" id="CHEBI:57792"/>
    </ligand>
</feature>
<feature type="binding site" evidence="1">
    <location>
        <position position="199"/>
    </location>
    <ligand>
        <name>3-amino-2-oxopropyl phosphate</name>
        <dbReference type="ChEBI" id="CHEBI:57279"/>
    </ligand>
</feature>
<feature type="binding site" evidence="1">
    <location>
        <begin position="221"/>
        <end position="222"/>
    </location>
    <ligand>
        <name>3-amino-2-oxopropyl phosphate</name>
        <dbReference type="ChEBI" id="CHEBI:57279"/>
    </ligand>
</feature>
<feature type="site" description="Transition state stabilizer" evidence="1">
    <location>
        <position position="157"/>
    </location>
</feature>
<comment type="function">
    <text evidence="1">Catalyzes the complicated ring closure reaction between the two acyclic compounds 1-deoxy-D-xylulose-5-phosphate (DXP) and 3-amino-2-oxopropyl phosphate (1-amino-acetone-3-phosphate or AAP) to form pyridoxine 5'-phosphate (PNP) and inorganic phosphate.</text>
</comment>
<comment type="catalytic activity">
    <reaction evidence="1">
        <text>3-amino-2-oxopropyl phosphate + 1-deoxy-D-xylulose 5-phosphate = pyridoxine 5'-phosphate + phosphate + 2 H2O + H(+)</text>
        <dbReference type="Rhea" id="RHEA:15265"/>
        <dbReference type="ChEBI" id="CHEBI:15377"/>
        <dbReference type="ChEBI" id="CHEBI:15378"/>
        <dbReference type="ChEBI" id="CHEBI:43474"/>
        <dbReference type="ChEBI" id="CHEBI:57279"/>
        <dbReference type="ChEBI" id="CHEBI:57792"/>
        <dbReference type="ChEBI" id="CHEBI:58589"/>
        <dbReference type="EC" id="2.6.99.2"/>
    </reaction>
</comment>
<comment type="pathway">
    <text evidence="1">Cofactor biosynthesis; pyridoxine 5'-phosphate biosynthesis; pyridoxine 5'-phosphate from D-erythrose 4-phosphate: step 5/5.</text>
</comment>
<comment type="subunit">
    <text evidence="1">Homooctamer; tetramer of dimers.</text>
</comment>
<comment type="subcellular location">
    <subcellularLocation>
        <location evidence="1">Cytoplasm</location>
    </subcellularLocation>
</comment>
<comment type="similarity">
    <text evidence="1">Belongs to the PNP synthase family.</text>
</comment>
<dbReference type="EC" id="2.6.99.2" evidence="1"/>
<dbReference type="EMBL" id="AM040264">
    <property type="protein sequence ID" value="CAJ11360.1"/>
    <property type="molecule type" value="Genomic_DNA"/>
</dbReference>
<dbReference type="RefSeq" id="WP_002964495.1">
    <property type="nucleotide sequence ID" value="NZ_KN046823.1"/>
</dbReference>
<dbReference type="SMR" id="Q2YQM7"/>
<dbReference type="STRING" id="359391.BAB1_1404"/>
<dbReference type="KEGG" id="bmf:BAB1_1404"/>
<dbReference type="PATRIC" id="fig|359391.11.peg.853"/>
<dbReference type="HOGENOM" id="CLU_074563_1_0_5"/>
<dbReference type="PhylomeDB" id="Q2YQM7"/>
<dbReference type="UniPathway" id="UPA00244">
    <property type="reaction ID" value="UER00313"/>
</dbReference>
<dbReference type="Proteomes" id="UP000002719">
    <property type="component" value="Chromosome I"/>
</dbReference>
<dbReference type="GO" id="GO:0005829">
    <property type="term" value="C:cytosol"/>
    <property type="evidence" value="ECO:0007669"/>
    <property type="project" value="TreeGrafter"/>
</dbReference>
<dbReference type="GO" id="GO:0033856">
    <property type="term" value="F:pyridoxine 5'-phosphate synthase activity"/>
    <property type="evidence" value="ECO:0007669"/>
    <property type="project" value="UniProtKB-EC"/>
</dbReference>
<dbReference type="GO" id="GO:0008615">
    <property type="term" value="P:pyridoxine biosynthetic process"/>
    <property type="evidence" value="ECO:0007669"/>
    <property type="project" value="UniProtKB-UniRule"/>
</dbReference>
<dbReference type="CDD" id="cd00003">
    <property type="entry name" value="PNPsynthase"/>
    <property type="match status" value="1"/>
</dbReference>
<dbReference type="Gene3D" id="3.20.20.70">
    <property type="entry name" value="Aldolase class I"/>
    <property type="match status" value="1"/>
</dbReference>
<dbReference type="HAMAP" id="MF_00279">
    <property type="entry name" value="PdxJ"/>
    <property type="match status" value="1"/>
</dbReference>
<dbReference type="InterPro" id="IPR013785">
    <property type="entry name" value="Aldolase_TIM"/>
</dbReference>
<dbReference type="InterPro" id="IPR004569">
    <property type="entry name" value="PyrdxlP_synth_PdxJ"/>
</dbReference>
<dbReference type="InterPro" id="IPR036130">
    <property type="entry name" value="Pyridoxine-5'_phos_synth"/>
</dbReference>
<dbReference type="NCBIfam" id="TIGR00559">
    <property type="entry name" value="pdxJ"/>
    <property type="match status" value="1"/>
</dbReference>
<dbReference type="NCBIfam" id="NF003626">
    <property type="entry name" value="PRK05265.1-4"/>
    <property type="match status" value="1"/>
</dbReference>
<dbReference type="PANTHER" id="PTHR30456">
    <property type="entry name" value="PYRIDOXINE 5'-PHOSPHATE SYNTHASE"/>
    <property type="match status" value="1"/>
</dbReference>
<dbReference type="PANTHER" id="PTHR30456:SF0">
    <property type="entry name" value="PYRIDOXINE 5'-PHOSPHATE SYNTHASE"/>
    <property type="match status" value="1"/>
</dbReference>
<dbReference type="Pfam" id="PF03740">
    <property type="entry name" value="PdxJ"/>
    <property type="match status" value="1"/>
</dbReference>
<dbReference type="SUPFAM" id="SSF63892">
    <property type="entry name" value="Pyridoxine 5'-phosphate synthase"/>
    <property type="match status" value="1"/>
</dbReference>
<sequence>MPAKLSVNLNAIAMLRNRRDLPWPSVTGLGRAALAAGAAGLTVHPRPDQRHIRFSDLGDIRALIDDEYPQAEFNIEGFPSEAFLDLVEKHEPEQVTLVPDDPMQATSDHGWDFMSKADFLAPIVARLKGRGMRVSLFADPDSLGYERAKAIGADRVELYTGPYGATHDDPAAAARELDRLEKAARAATALGLAVNAGHDLTVDNLPALVKRIPQLAEVSIGHGLTADALMYGIPVTVSRYITALAG</sequence>
<keyword id="KW-0963">Cytoplasm</keyword>
<keyword id="KW-0664">Pyridoxine biosynthesis</keyword>
<keyword id="KW-1185">Reference proteome</keyword>
<keyword id="KW-0808">Transferase</keyword>
<organism>
    <name type="scientific">Brucella abortus (strain 2308)</name>
    <dbReference type="NCBI Taxonomy" id="359391"/>
    <lineage>
        <taxon>Bacteria</taxon>
        <taxon>Pseudomonadati</taxon>
        <taxon>Pseudomonadota</taxon>
        <taxon>Alphaproteobacteria</taxon>
        <taxon>Hyphomicrobiales</taxon>
        <taxon>Brucellaceae</taxon>
        <taxon>Brucella/Ochrobactrum group</taxon>
        <taxon>Brucella</taxon>
    </lineage>
</organism>
<gene>
    <name evidence="1" type="primary">pdxJ</name>
    <name type="ordered locus">BAB1_1404</name>
</gene>
<proteinExistence type="inferred from homology"/>
<name>PDXJ_BRUA2</name>
<accession>Q2YQM7</accession>